<comment type="function">
    <text evidence="1">DNA-dependent RNA polymerase catalyzes the transcription of DNA into RNA using the four ribonucleoside triphosphates as substrates.</text>
</comment>
<comment type="catalytic activity">
    <reaction evidence="1">
        <text>RNA(n) + a ribonucleoside 5'-triphosphate = RNA(n+1) + diphosphate</text>
        <dbReference type="Rhea" id="RHEA:21248"/>
        <dbReference type="Rhea" id="RHEA-COMP:14527"/>
        <dbReference type="Rhea" id="RHEA-COMP:17342"/>
        <dbReference type="ChEBI" id="CHEBI:33019"/>
        <dbReference type="ChEBI" id="CHEBI:61557"/>
        <dbReference type="ChEBI" id="CHEBI:140395"/>
        <dbReference type="EC" id="2.7.7.6"/>
    </reaction>
</comment>
<comment type="subunit">
    <text evidence="1">The RNAP catalytic core consists of 2 alpha, 1 beta, 1 beta' and 1 omega subunit. When a sigma factor is associated with the core the holoenzyme is formed, which can initiate transcription.</text>
</comment>
<comment type="similarity">
    <text evidence="1">Belongs to the RNA polymerase beta chain family.</text>
</comment>
<name>RPOB_NITMU</name>
<organism>
    <name type="scientific">Nitrosospira multiformis (strain ATCC 25196 / NCIMB 11849 / C 71)</name>
    <dbReference type="NCBI Taxonomy" id="323848"/>
    <lineage>
        <taxon>Bacteria</taxon>
        <taxon>Pseudomonadati</taxon>
        <taxon>Pseudomonadota</taxon>
        <taxon>Betaproteobacteria</taxon>
        <taxon>Nitrosomonadales</taxon>
        <taxon>Nitrosomonadaceae</taxon>
        <taxon>Nitrosospira</taxon>
    </lineage>
</organism>
<keyword id="KW-0240">DNA-directed RNA polymerase</keyword>
<keyword id="KW-0548">Nucleotidyltransferase</keyword>
<keyword id="KW-1185">Reference proteome</keyword>
<keyword id="KW-0804">Transcription</keyword>
<keyword id="KW-0808">Transferase</keyword>
<reference key="1">
    <citation type="submission" date="2005-08" db="EMBL/GenBank/DDBJ databases">
        <title>Complete sequence of chromosome 1 of Nitrosospira multiformis ATCC 25196.</title>
        <authorList>
            <person name="Copeland A."/>
            <person name="Lucas S."/>
            <person name="Lapidus A."/>
            <person name="Barry K."/>
            <person name="Detter J.C."/>
            <person name="Glavina T."/>
            <person name="Hammon N."/>
            <person name="Israni S."/>
            <person name="Pitluck S."/>
            <person name="Chain P."/>
            <person name="Malfatti S."/>
            <person name="Shin M."/>
            <person name="Vergez L."/>
            <person name="Schmutz J."/>
            <person name="Larimer F."/>
            <person name="Land M."/>
            <person name="Hauser L."/>
            <person name="Kyrpides N."/>
            <person name="Lykidis A."/>
            <person name="Richardson P."/>
        </authorList>
    </citation>
    <scope>NUCLEOTIDE SEQUENCE [LARGE SCALE GENOMIC DNA]</scope>
    <source>
        <strain>ATCC 25196 / NCIMB 11849 / C 71</strain>
    </source>
</reference>
<dbReference type="EC" id="2.7.7.6" evidence="1"/>
<dbReference type="EMBL" id="CP000103">
    <property type="protein sequence ID" value="ABB74066.1"/>
    <property type="molecule type" value="Genomic_DNA"/>
</dbReference>
<dbReference type="RefSeq" id="WP_011380116.1">
    <property type="nucleotide sequence ID" value="NC_007614.1"/>
</dbReference>
<dbReference type="SMR" id="Q2YB05"/>
<dbReference type="STRING" id="323848.Nmul_A0759"/>
<dbReference type="KEGG" id="nmu:Nmul_A0759"/>
<dbReference type="eggNOG" id="COG0085">
    <property type="taxonomic scope" value="Bacteria"/>
</dbReference>
<dbReference type="HOGENOM" id="CLU_000524_4_0_4"/>
<dbReference type="OrthoDB" id="9803954at2"/>
<dbReference type="Proteomes" id="UP000002718">
    <property type="component" value="Chromosome"/>
</dbReference>
<dbReference type="GO" id="GO:0000428">
    <property type="term" value="C:DNA-directed RNA polymerase complex"/>
    <property type="evidence" value="ECO:0007669"/>
    <property type="project" value="UniProtKB-KW"/>
</dbReference>
<dbReference type="GO" id="GO:0003677">
    <property type="term" value="F:DNA binding"/>
    <property type="evidence" value="ECO:0007669"/>
    <property type="project" value="UniProtKB-UniRule"/>
</dbReference>
<dbReference type="GO" id="GO:0003899">
    <property type="term" value="F:DNA-directed RNA polymerase activity"/>
    <property type="evidence" value="ECO:0007669"/>
    <property type="project" value="UniProtKB-UniRule"/>
</dbReference>
<dbReference type="GO" id="GO:0032549">
    <property type="term" value="F:ribonucleoside binding"/>
    <property type="evidence" value="ECO:0007669"/>
    <property type="project" value="InterPro"/>
</dbReference>
<dbReference type="GO" id="GO:0006351">
    <property type="term" value="P:DNA-templated transcription"/>
    <property type="evidence" value="ECO:0007669"/>
    <property type="project" value="UniProtKB-UniRule"/>
</dbReference>
<dbReference type="CDD" id="cd00653">
    <property type="entry name" value="RNA_pol_B_RPB2"/>
    <property type="match status" value="1"/>
</dbReference>
<dbReference type="FunFam" id="2.40.50.100:FF:000006">
    <property type="entry name" value="DNA-directed RNA polymerase subunit beta"/>
    <property type="match status" value="1"/>
</dbReference>
<dbReference type="FunFam" id="3.90.1800.10:FF:000001">
    <property type="entry name" value="DNA-directed RNA polymerase subunit beta"/>
    <property type="match status" value="1"/>
</dbReference>
<dbReference type="Gene3D" id="2.40.50.100">
    <property type="match status" value="1"/>
</dbReference>
<dbReference type="Gene3D" id="2.40.50.150">
    <property type="match status" value="1"/>
</dbReference>
<dbReference type="Gene3D" id="3.90.1100.10">
    <property type="match status" value="2"/>
</dbReference>
<dbReference type="Gene3D" id="2.30.150.10">
    <property type="entry name" value="DNA-directed RNA polymerase, beta subunit, external 1 domain"/>
    <property type="match status" value="1"/>
</dbReference>
<dbReference type="Gene3D" id="2.40.270.10">
    <property type="entry name" value="DNA-directed RNA polymerase, subunit 2, domain 6"/>
    <property type="match status" value="2"/>
</dbReference>
<dbReference type="Gene3D" id="3.90.1800.10">
    <property type="entry name" value="RNA polymerase alpha subunit dimerisation domain"/>
    <property type="match status" value="1"/>
</dbReference>
<dbReference type="Gene3D" id="3.90.1110.10">
    <property type="entry name" value="RNA polymerase Rpb2, domain 2"/>
    <property type="match status" value="2"/>
</dbReference>
<dbReference type="HAMAP" id="MF_01321">
    <property type="entry name" value="RNApol_bact_RpoB"/>
    <property type="match status" value="1"/>
</dbReference>
<dbReference type="InterPro" id="IPR042107">
    <property type="entry name" value="DNA-dir_RNA_pol_bsu_ext_1_sf"/>
</dbReference>
<dbReference type="InterPro" id="IPR019462">
    <property type="entry name" value="DNA-dir_RNA_pol_bsu_external_1"/>
</dbReference>
<dbReference type="InterPro" id="IPR015712">
    <property type="entry name" value="DNA-dir_RNA_pol_su2"/>
</dbReference>
<dbReference type="InterPro" id="IPR007120">
    <property type="entry name" value="DNA-dir_RNAP_su2_dom"/>
</dbReference>
<dbReference type="InterPro" id="IPR037033">
    <property type="entry name" value="DNA-dir_RNAP_su2_hyb_sf"/>
</dbReference>
<dbReference type="InterPro" id="IPR010243">
    <property type="entry name" value="RNA_pol_bsu_bac"/>
</dbReference>
<dbReference type="InterPro" id="IPR007121">
    <property type="entry name" value="RNA_pol_bsu_CS"/>
</dbReference>
<dbReference type="InterPro" id="IPR007644">
    <property type="entry name" value="RNA_pol_bsu_protrusion"/>
</dbReference>
<dbReference type="InterPro" id="IPR007642">
    <property type="entry name" value="RNA_pol_Rpb2_2"/>
</dbReference>
<dbReference type="InterPro" id="IPR037034">
    <property type="entry name" value="RNA_pol_Rpb2_2_sf"/>
</dbReference>
<dbReference type="InterPro" id="IPR007645">
    <property type="entry name" value="RNA_pol_Rpb2_3"/>
</dbReference>
<dbReference type="InterPro" id="IPR007641">
    <property type="entry name" value="RNA_pol_Rpb2_7"/>
</dbReference>
<dbReference type="InterPro" id="IPR014724">
    <property type="entry name" value="RNA_pol_RPB2_OB-fold"/>
</dbReference>
<dbReference type="NCBIfam" id="NF001616">
    <property type="entry name" value="PRK00405.1"/>
    <property type="match status" value="1"/>
</dbReference>
<dbReference type="NCBIfam" id="TIGR02013">
    <property type="entry name" value="rpoB"/>
    <property type="match status" value="1"/>
</dbReference>
<dbReference type="PANTHER" id="PTHR20856">
    <property type="entry name" value="DNA-DIRECTED RNA POLYMERASE I SUBUNIT 2"/>
    <property type="match status" value="1"/>
</dbReference>
<dbReference type="Pfam" id="PF04563">
    <property type="entry name" value="RNA_pol_Rpb2_1"/>
    <property type="match status" value="1"/>
</dbReference>
<dbReference type="Pfam" id="PF04561">
    <property type="entry name" value="RNA_pol_Rpb2_2"/>
    <property type="match status" value="2"/>
</dbReference>
<dbReference type="Pfam" id="PF04565">
    <property type="entry name" value="RNA_pol_Rpb2_3"/>
    <property type="match status" value="1"/>
</dbReference>
<dbReference type="Pfam" id="PF10385">
    <property type="entry name" value="RNA_pol_Rpb2_45"/>
    <property type="match status" value="1"/>
</dbReference>
<dbReference type="Pfam" id="PF00562">
    <property type="entry name" value="RNA_pol_Rpb2_6"/>
    <property type="match status" value="1"/>
</dbReference>
<dbReference type="Pfam" id="PF04560">
    <property type="entry name" value="RNA_pol_Rpb2_7"/>
    <property type="match status" value="1"/>
</dbReference>
<dbReference type="SUPFAM" id="SSF64484">
    <property type="entry name" value="beta and beta-prime subunits of DNA dependent RNA-polymerase"/>
    <property type="match status" value="1"/>
</dbReference>
<dbReference type="PROSITE" id="PS01166">
    <property type="entry name" value="RNA_POL_BETA"/>
    <property type="match status" value="1"/>
</dbReference>
<protein>
    <recommendedName>
        <fullName evidence="1">DNA-directed RNA polymerase subunit beta</fullName>
        <shortName evidence="1">RNAP subunit beta</shortName>
        <ecNumber evidence="1">2.7.7.6</ecNumber>
    </recommendedName>
    <alternativeName>
        <fullName evidence="1">RNA polymerase subunit beta</fullName>
    </alternativeName>
    <alternativeName>
        <fullName evidence="1">Transcriptase subunit beta</fullName>
    </alternativeName>
</protein>
<sequence length="1357" mass="150941">MSYSFTEKKRIRKSFAKRASVLPIPFLLATQIESYAAFLQANLEPDQRAPEGLQAAFLSIFPIESHSRNARLDFVNYVLGAPPFDVKECQQRGLTYASPLRAKVRLTIMDKEASKPTVREVKEQEVYMGEIPLMTNTGSFVINGTERVIVSQLHRSPGVFFEHDRGKTHSSGKLLFSARIIPYRGSWLDFEFDPKDYLYFRVDRRRKMPITVLLKAIGYTPEQILENFFSFDSFHISRKSILFELLPERLRGDTARFDILSKSGKVIVQKDKRITVKHVREMQQAGIDRLEVPEDFLLGRVLGHNVVDKETGEILALANDEITETLLGKLRDANVEEIRTIYTNDLDQGAYISQTLKIDETADEMAAQVAIYRMMRPGEPPTEEAVKALFIGLFYAPERYDLSVVGRMKFNRRVGKTELDGPTTLSNEDIIAVIRILVELRNGRGEIDDIDHLGNRRVRSVGELAENQFRSGLVRVERAVKERLSQAESENLMPHDLINAKPVSAAVREFFGSSQLSQFMDQTNPLSEITHKRRVSALGPGGLTRERAGFEVRDVHPTHYGRVCPIETPEGPNIGLINSLALYAQTNEYGFMETPYRKVTDGLVTDEIHFLSAIEEGQYVIAQANAELDGDGRFTNDIVSCRHKNEFTLATPDRIEYMDVAPAQIVSVAASLIPFLEHDDANRALMGSNMQRQAVPCLRAEKPLVGTGIERVVAVDSGTAVKAVRGGVVDYVDASRIVVRVHDIETRAGEVGVDIYNLTKYTRSNQNTNINQRPLVKVGDVIARGDVVADGASTDKGELALGQNMLVAFMPWTGYNFEDSILISERIVANDRFTSIHIEELSVVSRDTKLGTEEITGDISNLSEAQLGRLDASGIVHIGAEVEAGDVLVGKVTPKGETQLTPEEKLLRAIFGEKASDVKDTSLRVPSGISGTVIDVQVFTREGIERDKRAQQIIDDELKRYKKDLADQMRIVEADAFVRIERLLIGKIATGGPKKLAKGATLTKEYLESIDPHHWFDIRLADEGASVQLEQIEEGLAQKRKAFDAAFEEKKKKLTQGDELPPGVQKMVKVYVAVKRRLQPGDKMAGRHGNKGVISKIVPVEDMPYMADGTPVDVVLNPLGVPSRMNVGQILETHLGWAAKGLGQKIGDMLRAGKEIVELRAFLDKIYNTSGKPEDIASLTDGEIADLAQNLQDGVPFATPVFDGATEQEIKDMLELAGLPRSGQVTLHDGRTGEAFDRPVTVGYMHVLKLHHLVDDKMHARSTGPYSLVTQQPLGGKAQFGGQRFGEMEVWALEAYGSAYTLQEMLTVKSDDVNGRTKVYESIVKGDHKIDAGMPESFNVLVKEIRSLAMDIDLERH</sequence>
<evidence type="ECO:0000255" key="1">
    <source>
        <dbReference type="HAMAP-Rule" id="MF_01321"/>
    </source>
</evidence>
<accession>Q2YB05</accession>
<feature type="chain" id="PRO_0000237307" description="DNA-directed RNA polymerase subunit beta">
    <location>
        <begin position="1"/>
        <end position="1357"/>
    </location>
</feature>
<proteinExistence type="inferred from homology"/>
<gene>
    <name evidence="1" type="primary">rpoB</name>
    <name type="ordered locus">Nmul_A0759</name>
</gene>